<sequence>MSWAQAILLARGASRGWGGICSTALTGAPFSQVPPQAPRGLRCSAAAHNPDSSLVPHPPEPPRRPVKALAVHEELFRPALDGARNKANFVRAVQNFTEYNVHKRGHVDFIYLALRKMREYGVERDLSVYNLLLDIFPKEVFRPRNIFHSIFLHYPRQQECGIAVLEQMENHGVMPNKETEFLLLQIFGRKSYPMLKLVRMKLWFTRFKNINPFPVPRDLPQDPVDLASLALRHMEPDLSARVTTYQMPLLKDSPNAMDPTETHIVGIQSPEQQSALARHDPARPIFVEGPFSLWLRDKCVYYHILRADLLPPEEREVEEIPEEWNLYYPMQLDLAYGRSSWDDYEFNIDEVEEGPVFAICVAGAHDQATLAKWIQGLQETNPALARIPVVFRLSGSSGELLPSSSELEEPPPPPPEGQEEEEDSQQRQQQGQS</sequence>
<dbReference type="EMBL" id="BC104572">
    <property type="protein sequence ID" value="AAI04573.1"/>
    <property type="molecule type" value="mRNA"/>
</dbReference>
<dbReference type="RefSeq" id="NP_001029458.1">
    <property type="nucleotide sequence ID" value="NM_001034286.1"/>
</dbReference>
<dbReference type="RefSeq" id="XP_010805109.1">
    <property type="nucleotide sequence ID" value="XM_010806807.2"/>
</dbReference>
<dbReference type="FunCoup" id="Q3SX05">
    <property type="interactions" value="1757"/>
</dbReference>
<dbReference type="STRING" id="9913.ENSBTAP00000020029"/>
<dbReference type="PaxDb" id="9913-ENSBTAP00000020029"/>
<dbReference type="Ensembl" id="ENSBTAT00000020029.4">
    <property type="protein sequence ID" value="ENSBTAP00000020029.2"/>
    <property type="gene ID" value="ENSBTAG00000015049.6"/>
</dbReference>
<dbReference type="GeneID" id="507245"/>
<dbReference type="KEGG" id="bta:507245"/>
<dbReference type="CTD" id="51295"/>
<dbReference type="VEuPathDB" id="HostDB:ENSBTAG00000015049"/>
<dbReference type="VGNC" id="VGNC:28313">
    <property type="gene designation" value="ECSIT"/>
</dbReference>
<dbReference type="eggNOG" id="KOG3941">
    <property type="taxonomic scope" value="Eukaryota"/>
</dbReference>
<dbReference type="GeneTree" id="ENSGT00390000005147"/>
<dbReference type="HOGENOM" id="CLU_046917_0_0_1"/>
<dbReference type="InParanoid" id="Q3SX05"/>
<dbReference type="OMA" id="GPFHIWL"/>
<dbReference type="OrthoDB" id="10064298at2759"/>
<dbReference type="TreeFam" id="TF314943"/>
<dbReference type="Reactome" id="R-BTA-166058">
    <property type="pathway name" value="MyD88:MAL(TIRAP) cascade initiated on plasma membrane"/>
</dbReference>
<dbReference type="Reactome" id="R-BTA-6799198">
    <property type="pathway name" value="Complex I biogenesis"/>
</dbReference>
<dbReference type="Reactome" id="R-BTA-975138">
    <property type="pathway name" value="TRAF6 mediated induction of NFkB and MAP kinases upon TLR7/8 or 9 activation"/>
</dbReference>
<dbReference type="Reactome" id="R-BTA-975871">
    <property type="pathway name" value="MyD88 cascade initiated on plasma membrane"/>
</dbReference>
<dbReference type="Proteomes" id="UP000009136">
    <property type="component" value="Chromosome 7"/>
</dbReference>
<dbReference type="Bgee" id="ENSBTAG00000015049">
    <property type="expression patterns" value="Expressed in infraspinatus muscle and 104 other cell types or tissues"/>
</dbReference>
<dbReference type="GO" id="GO:0005737">
    <property type="term" value="C:cytoplasm"/>
    <property type="evidence" value="ECO:0000250"/>
    <property type="project" value="UniProtKB"/>
</dbReference>
<dbReference type="GO" id="GO:0005829">
    <property type="term" value="C:cytosol"/>
    <property type="evidence" value="ECO:0007669"/>
    <property type="project" value="Ensembl"/>
</dbReference>
<dbReference type="GO" id="GO:0005739">
    <property type="term" value="C:mitochondrion"/>
    <property type="evidence" value="ECO:0000250"/>
    <property type="project" value="UniProtKB"/>
</dbReference>
<dbReference type="GO" id="GO:0005654">
    <property type="term" value="C:nucleoplasm"/>
    <property type="evidence" value="ECO:0007669"/>
    <property type="project" value="Ensembl"/>
</dbReference>
<dbReference type="GO" id="GO:0005634">
    <property type="term" value="C:nucleus"/>
    <property type="evidence" value="ECO:0000250"/>
    <property type="project" value="UniProtKB"/>
</dbReference>
<dbReference type="GO" id="GO:0060090">
    <property type="term" value="F:molecular adaptor activity"/>
    <property type="evidence" value="ECO:0007669"/>
    <property type="project" value="Ensembl"/>
</dbReference>
<dbReference type="GO" id="GO:0007178">
    <property type="term" value="P:cell surface receptor protein serine/threonine kinase signaling pathway"/>
    <property type="evidence" value="ECO:0000318"/>
    <property type="project" value="GO_Central"/>
</dbReference>
<dbReference type="GO" id="GO:0045087">
    <property type="term" value="P:innate immune response"/>
    <property type="evidence" value="ECO:0000318"/>
    <property type="project" value="GO_Central"/>
</dbReference>
<dbReference type="GO" id="GO:0051341">
    <property type="term" value="P:regulation of oxidoreductase activity"/>
    <property type="evidence" value="ECO:0000250"/>
    <property type="project" value="UniProtKB"/>
</dbReference>
<dbReference type="GO" id="GO:0061635">
    <property type="term" value="P:regulation of protein complex stability"/>
    <property type="evidence" value="ECO:0000250"/>
    <property type="project" value="UniProtKB"/>
</dbReference>
<dbReference type="GO" id="GO:0034142">
    <property type="term" value="P:toll-like receptor 4 signaling pathway"/>
    <property type="evidence" value="ECO:0007669"/>
    <property type="project" value="Ensembl"/>
</dbReference>
<dbReference type="InterPro" id="IPR029342">
    <property type="entry name" value="ECIST_C"/>
</dbReference>
<dbReference type="InterPro" id="IPR010418">
    <property type="entry name" value="ECSIT"/>
</dbReference>
<dbReference type="InterPro" id="IPR046448">
    <property type="entry name" value="ECSIT_N"/>
</dbReference>
<dbReference type="PANTHER" id="PTHR13113">
    <property type="entry name" value="ECSIT EVOLUTIONARILY CONSERVED SIGNALING INTERMEDIATE IN TOLL PATHWAYS"/>
    <property type="match status" value="1"/>
</dbReference>
<dbReference type="PANTHER" id="PTHR13113:SF1">
    <property type="entry name" value="EVOLUTIONARILY CONSERVED SIGNALING INTERMEDIATE IN TOLL PATHWAY, MITOCHONDRIAL"/>
    <property type="match status" value="1"/>
</dbReference>
<dbReference type="Pfam" id="PF14784">
    <property type="entry name" value="ECSIT_C"/>
    <property type="match status" value="1"/>
</dbReference>
<dbReference type="Pfam" id="PF06239">
    <property type="entry name" value="ECSIT_N"/>
    <property type="match status" value="1"/>
</dbReference>
<dbReference type="SMART" id="SM01284">
    <property type="entry name" value="ECSIT_Cterm"/>
    <property type="match status" value="1"/>
</dbReference>
<reference key="1">
    <citation type="submission" date="2005-09" db="EMBL/GenBank/DDBJ databases">
        <authorList>
            <consortium name="NIH - Mammalian Gene Collection (MGC) project"/>
        </authorList>
    </citation>
    <scope>NUCLEOTIDE SEQUENCE [LARGE SCALE MRNA]</scope>
    <source>
        <strain>Hereford</strain>
        <tissue>Uterus</tissue>
    </source>
</reference>
<name>ECSIT_BOVIN</name>
<protein>
    <recommendedName>
        <fullName evidence="2">Evolutionarily conserved signaling intermediate in Toll pathway, mitochondrial</fullName>
    </recommendedName>
</protein>
<feature type="transit peptide" description="Mitochondrion" evidence="4">
    <location>
        <begin position="1"/>
        <end position="48"/>
    </location>
</feature>
<feature type="chain" id="PRO_0000291984" description="Evolutionarily conserved signaling intermediate in Toll pathway, mitochondrial">
    <location>
        <begin position="49"/>
        <end position="433"/>
    </location>
</feature>
<feature type="region of interest" description="Disordered" evidence="5">
    <location>
        <begin position="36"/>
        <end position="63"/>
    </location>
</feature>
<feature type="region of interest" description="Disordered" evidence="5">
    <location>
        <begin position="397"/>
        <end position="433"/>
    </location>
</feature>
<feature type="cross-link" description="Glycyl lysine isopeptide (Lys-Gly) (interchain with G-Cter in ubiquitin)" evidence="2">
    <location>
        <position position="372"/>
    </location>
</feature>
<organism>
    <name type="scientific">Bos taurus</name>
    <name type="common">Bovine</name>
    <dbReference type="NCBI Taxonomy" id="9913"/>
    <lineage>
        <taxon>Eukaryota</taxon>
        <taxon>Metazoa</taxon>
        <taxon>Chordata</taxon>
        <taxon>Craniata</taxon>
        <taxon>Vertebrata</taxon>
        <taxon>Euteleostomi</taxon>
        <taxon>Mammalia</taxon>
        <taxon>Eutheria</taxon>
        <taxon>Laurasiatheria</taxon>
        <taxon>Artiodactyla</taxon>
        <taxon>Ruminantia</taxon>
        <taxon>Pecora</taxon>
        <taxon>Bovidae</taxon>
        <taxon>Bovinae</taxon>
        <taxon>Bos</taxon>
    </lineage>
</organism>
<gene>
    <name evidence="2" type="primary">ECSIT</name>
</gene>
<proteinExistence type="evidence at transcript level"/>
<accession>Q3SX05</accession>
<evidence type="ECO:0000250" key="1"/>
<evidence type="ECO:0000250" key="2">
    <source>
        <dbReference type="UniProtKB" id="Q9BQ95"/>
    </source>
</evidence>
<evidence type="ECO:0000250" key="3">
    <source>
        <dbReference type="UniProtKB" id="Q9QZH6"/>
    </source>
</evidence>
<evidence type="ECO:0000255" key="4"/>
<evidence type="ECO:0000256" key="5">
    <source>
        <dbReference type="SAM" id="MobiDB-lite"/>
    </source>
</evidence>
<evidence type="ECO:0000305" key="6"/>
<keyword id="KW-0963">Cytoplasm</keyword>
<keyword id="KW-0391">Immunity</keyword>
<keyword id="KW-0399">Innate immunity</keyword>
<keyword id="KW-1017">Isopeptide bond</keyword>
<keyword id="KW-0496">Mitochondrion</keyword>
<keyword id="KW-0539">Nucleus</keyword>
<keyword id="KW-1185">Reference proteome</keyword>
<keyword id="KW-0809">Transit peptide</keyword>
<keyword id="KW-0832">Ubl conjugation</keyword>
<comment type="function">
    <text evidence="1 2">Adapter protein that plays a role in different signaling pathways including TLRs and IL-1 pathways or innate antiviral induction signaling. Plays a role in the activation of NF-kappa-B by forming a signal complex with TRAF6 and TAK1/MAP3K7 to activate TAK1/MAP3K7 leading to activation of IKKs. Once ubiquitinated, interacts with the dissociated RELA and NFKB1 proteins and translocates to the nucleus where it induces NF-kappa-B-dependent gene expression. Plays a role in innate antiviral immune response by bridging the pattern recognition receptors RIGI and MDA5/IFIT1 to the MAVS complex at the mitochondrion (By similarity). Promotes proteolytic activation of MAP3K1. Involved in the BMP signaling pathway. Required for normal embryonic development (By similarity).</text>
</comment>
<comment type="function">
    <text evidence="2">As part of the MCIA complex, involved in the assembly of the mitochondrial complex I.</text>
</comment>
<comment type="subunit">
    <text evidence="2 3">Interacts with MAP3K1, SMAD4 and TRAF6. Interacts with SMAD1 only after BMP4-treatment (By similarity). Part of the mitochondrial complex I assembly/MCIA complex that comprises at least the core subunits TMEM126B, NDUFAF1, ECSIT and ACAD9 and complement subunits such as COA1 and TMEM186. Interacts with NDUFAF1. Interacts with ACAD9. Interacts with TRIM59. Interacts with TMEM70 and TMEM242. Interacts (when ubiquitinated) with NF-kappa-B subunits RELA and NFKB1. Interacts with RIGI, IFIT1 and MAVS; these interactions promote RLR-mediated type I IFN induction. Interacts with SQSTM1; this interaction inhibits TLR4 signaling via functional regulation of the TRAF6-ECSIT complex. Interacts with cereblon/CRBN; this interaction inhibits the ubiquitination of ECSIT (By similarity).</text>
</comment>
<comment type="subcellular location">
    <subcellularLocation>
        <location evidence="2">Cytoplasm</location>
    </subcellularLocation>
    <subcellularLocation>
        <location evidence="2">Nucleus</location>
    </subcellularLocation>
    <subcellularLocation>
        <location evidence="2">Mitochondrion</location>
    </subcellularLocation>
</comment>
<comment type="PTM">
    <text evidence="2">Ubiquitinated on Lys-372; leading to translocation in the nucleus together with RELA and NFKB1 and expression of NF-kappa-B-dependent genes.</text>
</comment>
<comment type="similarity">
    <text evidence="6">Belongs to the ECSIT family.</text>
</comment>